<reference key="1">
    <citation type="submission" date="2007-10" db="EMBL/GenBank/DDBJ databases">
        <title>Complete genome of Alkaliphilus oremlandii OhILAs.</title>
        <authorList>
            <person name="Copeland A."/>
            <person name="Lucas S."/>
            <person name="Lapidus A."/>
            <person name="Barry K."/>
            <person name="Detter J.C."/>
            <person name="Glavina del Rio T."/>
            <person name="Hammon N."/>
            <person name="Israni S."/>
            <person name="Dalin E."/>
            <person name="Tice H."/>
            <person name="Pitluck S."/>
            <person name="Chain P."/>
            <person name="Malfatti S."/>
            <person name="Shin M."/>
            <person name="Vergez L."/>
            <person name="Schmutz J."/>
            <person name="Larimer F."/>
            <person name="Land M."/>
            <person name="Hauser L."/>
            <person name="Kyrpides N."/>
            <person name="Mikhailova N."/>
            <person name="Stolz J.F."/>
            <person name="Dawson A."/>
            <person name="Fisher E."/>
            <person name="Crable B."/>
            <person name="Perera E."/>
            <person name="Lisak J."/>
            <person name="Ranganathan M."/>
            <person name="Basu P."/>
            <person name="Richardson P."/>
        </authorList>
    </citation>
    <scope>NUCLEOTIDE SEQUENCE [LARGE SCALE GENOMIC DNA]</scope>
    <source>
        <strain>OhILAs</strain>
    </source>
</reference>
<organism>
    <name type="scientific">Alkaliphilus oremlandii (strain OhILAs)</name>
    <name type="common">Clostridium oremlandii (strain OhILAs)</name>
    <dbReference type="NCBI Taxonomy" id="350688"/>
    <lineage>
        <taxon>Bacteria</taxon>
        <taxon>Bacillati</taxon>
        <taxon>Bacillota</taxon>
        <taxon>Clostridia</taxon>
        <taxon>Peptostreptococcales</taxon>
        <taxon>Natronincolaceae</taxon>
        <taxon>Alkaliphilus</taxon>
    </lineage>
</organism>
<dbReference type="EMBL" id="CP000853">
    <property type="protein sequence ID" value="ABW19481.1"/>
    <property type="molecule type" value="Genomic_DNA"/>
</dbReference>
<dbReference type="RefSeq" id="WP_012159793.1">
    <property type="nucleotide sequence ID" value="NC_009922.1"/>
</dbReference>
<dbReference type="SMR" id="A8MI49"/>
<dbReference type="STRING" id="350688.Clos_1943"/>
<dbReference type="KEGG" id="aoe:Clos_1943"/>
<dbReference type="eggNOG" id="COG1058">
    <property type="taxonomic scope" value="Bacteria"/>
</dbReference>
<dbReference type="eggNOG" id="COG1546">
    <property type="taxonomic scope" value="Bacteria"/>
</dbReference>
<dbReference type="HOGENOM" id="CLU_030805_9_3_9"/>
<dbReference type="OrthoDB" id="9801454at2"/>
<dbReference type="Proteomes" id="UP000000269">
    <property type="component" value="Chromosome"/>
</dbReference>
<dbReference type="CDD" id="cd00885">
    <property type="entry name" value="cinA"/>
    <property type="match status" value="1"/>
</dbReference>
<dbReference type="Gene3D" id="3.30.70.2860">
    <property type="match status" value="1"/>
</dbReference>
<dbReference type="Gene3D" id="3.90.950.20">
    <property type="entry name" value="CinA-like"/>
    <property type="match status" value="1"/>
</dbReference>
<dbReference type="Gene3D" id="3.40.980.10">
    <property type="entry name" value="MoaB/Mog-like domain"/>
    <property type="match status" value="1"/>
</dbReference>
<dbReference type="HAMAP" id="MF_00226_B">
    <property type="entry name" value="CinA_B"/>
    <property type="match status" value="1"/>
</dbReference>
<dbReference type="InterPro" id="IPR050101">
    <property type="entry name" value="CinA"/>
</dbReference>
<dbReference type="InterPro" id="IPR036653">
    <property type="entry name" value="CinA-like_C"/>
</dbReference>
<dbReference type="InterPro" id="IPR008136">
    <property type="entry name" value="CinA_C"/>
</dbReference>
<dbReference type="InterPro" id="IPR041424">
    <property type="entry name" value="CinA_KH"/>
</dbReference>
<dbReference type="InterPro" id="IPR008135">
    <property type="entry name" value="Competence-induced_CinA"/>
</dbReference>
<dbReference type="InterPro" id="IPR036425">
    <property type="entry name" value="MoaB/Mog-like_dom_sf"/>
</dbReference>
<dbReference type="InterPro" id="IPR001453">
    <property type="entry name" value="MoaB/Mog_dom"/>
</dbReference>
<dbReference type="NCBIfam" id="TIGR00200">
    <property type="entry name" value="cinA_nterm"/>
    <property type="match status" value="1"/>
</dbReference>
<dbReference type="NCBIfam" id="TIGR00177">
    <property type="entry name" value="molyb_syn"/>
    <property type="match status" value="1"/>
</dbReference>
<dbReference type="NCBIfam" id="TIGR00199">
    <property type="entry name" value="PncC_domain"/>
    <property type="match status" value="1"/>
</dbReference>
<dbReference type="NCBIfam" id="NF001813">
    <property type="entry name" value="PRK00549.1"/>
    <property type="match status" value="1"/>
</dbReference>
<dbReference type="PANTHER" id="PTHR13939">
    <property type="entry name" value="NICOTINAMIDE-NUCLEOTIDE AMIDOHYDROLASE PNCC"/>
    <property type="match status" value="1"/>
</dbReference>
<dbReference type="PANTHER" id="PTHR13939:SF0">
    <property type="entry name" value="NMN AMIDOHYDROLASE-LIKE PROTEIN YFAY"/>
    <property type="match status" value="1"/>
</dbReference>
<dbReference type="Pfam" id="PF02464">
    <property type="entry name" value="CinA"/>
    <property type="match status" value="1"/>
</dbReference>
<dbReference type="Pfam" id="PF18146">
    <property type="entry name" value="CinA_KH"/>
    <property type="match status" value="1"/>
</dbReference>
<dbReference type="Pfam" id="PF00994">
    <property type="entry name" value="MoCF_biosynth"/>
    <property type="match status" value="1"/>
</dbReference>
<dbReference type="PIRSF" id="PIRSF006728">
    <property type="entry name" value="CinA"/>
    <property type="match status" value="1"/>
</dbReference>
<dbReference type="SMART" id="SM00852">
    <property type="entry name" value="MoCF_biosynth"/>
    <property type="match status" value="1"/>
</dbReference>
<dbReference type="SUPFAM" id="SSF142433">
    <property type="entry name" value="CinA-like"/>
    <property type="match status" value="1"/>
</dbReference>
<dbReference type="SUPFAM" id="SSF53218">
    <property type="entry name" value="Molybdenum cofactor biosynthesis proteins"/>
    <property type="match status" value="1"/>
</dbReference>
<keyword id="KW-1185">Reference proteome</keyword>
<feature type="chain" id="PRO_1000058689" description="Putative competence-damage inducible protein">
    <location>
        <begin position="1"/>
        <end position="413"/>
    </location>
</feature>
<evidence type="ECO:0000255" key="1">
    <source>
        <dbReference type="HAMAP-Rule" id="MF_00226"/>
    </source>
</evidence>
<sequence>MRAEIISIGTELLLGEIINTNAQYIARELASLGIDVYHQSVIGDNETRLSEAFETAFKRSDVVITTGGLGPTKDDMTKETAASFFGKKLIPHEESLKKIEAYFKGRGLNVNEGNRKQGYFPEGSIVLPNPNGTAPACIIEENNKKLILLPGPPREMIPLFETQVLPYLKKFQDKFFSFKVLNVCGIGEGEMEEAIMDIVDHQTNPTVAPYAKPNGLTLRIAASGHTQKEADELIHPMEEQIRERLGLNIYGEDDISLEEIVAKILIEKKLTISIAESCTGGFLSGRLVNYPGISSVFMEGIVTYSNESKVKYLGVNPQTIEKYGAVSEEVAREMAEGICKSAHTNIGLSVTGLAGPSGGREDKPIGLVYVGICINGVTTVKELNLGGSRNRIRSLATTYTLDLLRREVLNRSL</sequence>
<comment type="similarity">
    <text evidence="1">Belongs to the CinA family.</text>
</comment>
<protein>
    <recommendedName>
        <fullName evidence="1">Putative competence-damage inducible protein</fullName>
    </recommendedName>
</protein>
<gene>
    <name evidence="1" type="primary">cinA</name>
    <name type="ordered locus">Clos_1943</name>
</gene>
<accession>A8MI49</accession>
<name>CINA_ALKOO</name>
<proteinExistence type="inferred from homology"/>